<sequence>MATINIIDVKKNYGAVPAVKGINLSVADGELIVLVGPSGCGKSTLLRMIAGLETISEGHVEIAGRNVNKAEPADRDIAMVFQNYALYPHMTVRGNLEYGLKNRGTERAEINRRVAEAAEILEIGPMLDRKPRELSGGQRQRVAMGRAIVREPAAFLFDEPLSNLDAKLRVQMRVEIRRLQRRLKTTSIYVTHDQLEAMTLADRLVVMNGGLVEQVGTPVAVYDRPASLFVASFIGSPPMNLVPIDVLRAADSASSLALPAGTDMVGLRPDALLVTKPAEPSVRLDATVELLEPIGGESHLHVRLGGSQQTVVLTVPGRPDFAENANIDVFARVGAMHPFNSDTGKRTD</sequence>
<geneLocation type="plasmid">
    <name>pRL12</name>
</geneLocation>
<name>UGPC3_RHIJ3</name>
<protein>
    <recommendedName>
        <fullName evidence="1">sn-glycerol-3-phosphate import ATP-binding protein UgpC 3</fullName>
        <ecNumber evidence="1">7.6.2.10</ecNumber>
    </recommendedName>
</protein>
<gene>
    <name evidence="1" type="primary">ugpC3</name>
    <name type="ordered locus">pRL120014</name>
</gene>
<keyword id="KW-0067">ATP-binding</keyword>
<keyword id="KW-0997">Cell inner membrane</keyword>
<keyword id="KW-1003">Cell membrane</keyword>
<keyword id="KW-0472">Membrane</keyword>
<keyword id="KW-0547">Nucleotide-binding</keyword>
<keyword id="KW-0614">Plasmid</keyword>
<keyword id="KW-0762">Sugar transport</keyword>
<keyword id="KW-1278">Translocase</keyword>
<keyword id="KW-0813">Transport</keyword>
<accession>Q1M589</accession>
<evidence type="ECO:0000255" key="1">
    <source>
        <dbReference type="HAMAP-Rule" id="MF_01727"/>
    </source>
</evidence>
<reference key="1">
    <citation type="journal article" date="2006" name="Genome Biol.">
        <title>The genome of Rhizobium leguminosarum has recognizable core and accessory components.</title>
        <authorList>
            <person name="Young J.P.W."/>
            <person name="Crossman L.C."/>
            <person name="Johnston A.W.B."/>
            <person name="Thomson N.R."/>
            <person name="Ghazoui Z.F."/>
            <person name="Hull K.H."/>
            <person name="Wexler M."/>
            <person name="Curson A.R.J."/>
            <person name="Todd J.D."/>
            <person name="Poole P.S."/>
            <person name="Mauchline T.H."/>
            <person name="East A.K."/>
            <person name="Quail M.A."/>
            <person name="Churcher C."/>
            <person name="Arrowsmith C."/>
            <person name="Cherevach I."/>
            <person name="Chillingworth T."/>
            <person name="Clarke K."/>
            <person name="Cronin A."/>
            <person name="Davis P."/>
            <person name="Fraser A."/>
            <person name="Hance Z."/>
            <person name="Hauser H."/>
            <person name="Jagels K."/>
            <person name="Moule S."/>
            <person name="Mungall K."/>
            <person name="Norbertczak H."/>
            <person name="Rabbinowitsch E."/>
            <person name="Sanders M."/>
            <person name="Simmonds M."/>
            <person name="Whitehead S."/>
            <person name="Parkhill J."/>
        </authorList>
    </citation>
    <scope>NUCLEOTIDE SEQUENCE [LARGE SCALE GENOMIC DNA]</scope>
    <source>
        <strain>DSM 114642 / LMG 32736 / 3841</strain>
    </source>
</reference>
<comment type="function">
    <text evidence="1">Part of the ABC transporter complex UgpBAEC involved in sn-glycerol-3-phosphate (G3P) import. Responsible for energy coupling to the transport system.</text>
</comment>
<comment type="catalytic activity">
    <reaction evidence="1">
        <text>sn-glycerol 3-phosphate(out) + ATP + H2O = sn-glycerol 3-phosphate(in) + ADP + phosphate + H(+)</text>
        <dbReference type="Rhea" id="RHEA:21668"/>
        <dbReference type="ChEBI" id="CHEBI:15377"/>
        <dbReference type="ChEBI" id="CHEBI:15378"/>
        <dbReference type="ChEBI" id="CHEBI:30616"/>
        <dbReference type="ChEBI" id="CHEBI:43474"/>
        <dbReference type="ChEBI" id="CHEBI:57597"/>
        <dbReference type="ChEBI" id="CHEBI:456216"/>
        <dbReference type="EC" id="7.6.2.10"/>
    </reaction>
</comment>
<comment type="subunit">
    <text evidence="1">The complex is composed of two ATP-binding proteins (UgpC), two transmembrane proteins (UgpA and UgpE) and a solute-binding protein (UgpB).</text>
</comment>
<comment type="subcellular location">
    <subcellularLocation>
        <location evidence="1">Cell inner membrane</location>
        <topology evidence="1">Peripheral membrane protein</topology>
    </subcellularLocation>
</comment>
<comment type="similarity">
    <text evidence="1">Belongs to the ABC transporter superfamily. sn-glycerol-3-phosphate importer (TC 3.A.1.1.3) family.</text>
</comment>
<dbReference type="EC" id="7.6.2.10" evidence="1"/>
<dbReference type="EMBL" id="AM236086">
    <property type="protein sequence ID" value="CAK11728.1"/>
    <property type="molecule type" value="Genomic_DNA"/>
</dbReference>
<dbReference type="RefSeq" id="WP_011648814.1">
    <property type="nucleotide sequence ID" value="NC_008378.1"/>
</dbReference>
<dbReference type="SMR" id="Q1M589"/>
<dbReference type="EnsemblBacteria" id="CAK11728">
    <property type="protein sequence ID" value="CAK11728"/>
    <property type="gene ID" value="pRL120014"/>
</dbReference>
<dbReference type="KEGG" id="rle:pRL120014"/>
<dbReference type="eggNOG" id="COG3842">
    <property type="taxonomic scope" value="Bacteria"/>
</dbReference>
<dbReference type="HOGENOM" id="CLU_000604_1_1_5"/>
<dbReference type="Proteomes" id="UP000006575">
    <property type="component" value="Plasmid pRL12"/>
</dbReference>
<dbReference type="GO" id="GO:0055052">
    <property type="term" value="C:ATP-binding cassette (ABC) transporter complex, substrate-binding subunit-containing"/>
    <property type="evidence" value="ECO:0007669"/>
    <property type="project" value="TreeGrafter"/>
</dbReference>
<dbReference type="GO" id="GO:0015430">
    <property type="term" value="F:ABC-type glycerol-3-phosphate transporter activity"/>
    <property type="evidence" value="ECO:0007669"/>
    <property type="project" value="UniProtKB-EC"/>
</dbReference>
<dbReference type="GO" id="GO:0005524">
    <property type="term" value="F:ATP binding"/>
    <property type="evidence" value="ECO:0007669"/>
    <property type="project" value="UniProtKB-KW"/>
</dbReference>
<dbReference type="GO" id="GO:0016887">
    <property type="term" value="F:ATP hydrolysis activity"/>
    <property type="evidence" value="ECO:0007669"/>
    <property type="project" value="InterPro"/>
</dbReference>
<dbReference type="GO" id="GO:0008643">
    <property type="term" value="P:carbohydrate transport"/>
    <property type="evidence" value="ECO:0007669"/>
    <property type="project" value="InterPro"/>
</dbReference>
<dbReference type="GO" id="GO:0001407">
    <property type="term" value="P:glycerophosphodiester transmembrane transport"/>
    <property type="evidence" value="ECO:0007669"/>
    <property type="project" value="TreeGrafter"/>
</dbReference>
<dbReference type="CDD" id="cd03301">
    <property type="entry name" value="ABC_MalK_N"/>
    <property type="match status" value="1"/>
</dbReference>
<dbReference type="FunFam" id="3.40.50.300:FF:000042">
    <property type="entry name" value="Maltose/maltodextrin ABC transporter, ATP-binding protein"/>
    <property type="match status" value="1"/>
</dbReference>
<dbReference type="Gene3D" id="2.40.50.100">
    <property type="match status" value="1"/>
</dbReference>
<dbReference type="Gene3D" id="2.40.50.140">
    <property type="entry name" value="Nucleic acid-binding proteins"/>
    <property type="match status" value="1"/>
</dbReference>
<dbReference type="Gene3D" id="3.40.50.300">
    <property type="entry name" value="P-loop containing nucleotide triphosphate hydrolases"/>
    <property type="match status" value="1"/>
</dbReference>
<dbReference type="InterPro" id="IPR003593">
    <property type="entry name" value="AAA+_ATPase"/>
</dbReference>
<dbReference type="InterPro" id="IPR003439">
    <property type="entry name" value="ABC_transporter-like_ATP-bd"/>
</dbReference>
<dbReference type="InterPro" id="IPR017871">
    <property type="entry name" value="ABC_transporter-like_CS"/>
</dbReference>
<dbReference type="InterPro" id="IPR015855">
    <property type="entry name" value="ABC_transpr_MalK-like"/>
</dbReference>
<dbReference type="InterPro" id="IPR047641">
    <property type="entry name" value="ABC_transpr_MalK/UgpC-like"/>
</dbReference>
<dbReference type="InterPro" id="IPR008995">
    <property type="entry name" value="Mo/tungstate-bd_C_term_dom"/>
</dbReference>
<dbReference type="InterPro" id="IPR012340">
    <property type="entry name" value="NA-bd_OB-fold"/>
</dbReference>
<dbReference type="InterPro" id="IPR027417">
    <property type="entry name" value="P-loop_NTPase"/>
</dbReference>
<dbReference type="InterPro" id="IPR013611">
    <property type="entry name" value="Transp-assoc_OB_typ2"/>
</dbReference>
<dbReference type="NCBIfam" id="NF008653">
    <property type="entry name" value="PRK11650.1"/>
    <property type="match status" value="1"/>
</dbReference>
<dbReference type="PANTHER" id="PTHR43875">
    <property type="entry name" value="MALTODEXTRIN IMPORT ATP-BINDING PROTEIN MSMX"/>
    <property type="match status" value="1"/>
</dbReference>
<dbReference type="PANTHER" id="PTHR43875:SF12">
    <property type="entry name" value="SN-GLYCEROL-3-PHOSPHATE IMPORT ATP-BINDING PROTEIN UGPC"/>
    <property type="match status" value="1"/>
</dbReference>
<dbReference type="Pfam" id="PF00005">
    <property type="entry name" value="ABC_tran"/>
    <property type="match status" value="1"/>
</dbReference>
<dbReference type="Pfam" id="PF08402">
    <property type="entry name" value="TOBE_2"/>
    <property type="match status" value="1"/>
</dbReference>
<dbReference type="SMART" id="SM00382">
    <property type="entry name" value="AAA"/>
    <property type="match status" value="1"/>
</dbReference>
<dbReference type="SUPFAM" id="SSF50331">
    <property type="entry name" value="MOP-like"/>
    <property type="match status" value="1"/>
</dbReference>
<dbReference type="SUPFAM" id="SSF52540">
    <property type="entry name" value="P-loop containing nucleoside triphosphate hydrolases"/>
    <property type="match status" value="1"/>
</dbReference>
<dbReference type="PROSITE" id="PS00211">
    <property type="entry name" value="ABC_TRANSPORTER_1"/>
    <property type="match status" value="1"/>
</dbReference>
<dbReference type="PROSITE" id="PS50893">
    <property type="entry name" value="ABC_TRANSPORTER_2"/>
    <property type="match status" value="1"/>
</dbReference>
<dbReference type="PROSITE" id="PS51315">
    <property type="entry name" value="UGPC"/>
    <property type="match status" value="1"/>
</dbReference>
<organism>
    <name type="scientific">Rhizobium johnstonii (strain DSM 114642 / LMG 32736 / 3841)</name>
    <name type="common">Rhizobium leguminosarum bv. viciae</name>
    <dbReference type="NCBI Taxonomy" id="216596"/>
    <lineage>
        <taxon>Bacteria</taxon>
        <taxon>Pseudomonadati</taxon>
        <taxon>Pseudomonadota</taxon>
        <taxon>Alphaproteobacteria</taxon>
        <taxon>Hyphomicrobiales</taxon>
        <taxon>Rhizobiaceae</taxon>
        <taxon>Rhizobium/Agrobacterium group</taxon>
        <taxon>Rhizobium</taxon>
        <taxon>Rhizobium johnstonii</taxon>
    </lineage>
</organism>
<feature type="chain" id="PRO_0000289767" description="sn-glycerol-3-phosphate import ATP-binding protein UgpC 3">
    <location>
        <begin position="1"/>
        <end position="348"/>
    </location>
</feature>
<feature type="domain" description="ABC transporter" evidence="1">
    <location>
        <begin position="4"/>
        <end position="234"/>
    </location>
</feature>
<feature type="binding site" evidence="1">
    <location>
        <begin position="36"/>
        <end position="43"/>
    </location>
    <ligand>
        <name>ATP</name>
        <dbReference type="ChEBI" id="CHEBI:30616"/>
    </ligand>
</feature>
<proteinExistence type="inferred from homology"/>